<organismHost>
    <name type="scientific">Bos taurus</name>
    <name type="common">Bovine</name>
    <dbReference type="NCBI Taxonomy" id="9913"/>
</organismHost>
<proteinExistence type="inferred from homology"/>
<accession>Q01223</accession>
<accession>Q01224</accession>
<accession>Q80HT5</accession>
<keyword id="KW-0040">ANK repeat</keyword>
<keyword id="KW-1185">Reference proteome</keyword>
<keyword id="KW-0677">Repeat</keyword>
<dbReference type="EMBL" id="D11079">
    <property type="protein sequence ID" value="BAA01849.1"/>
    <property type="status" value="ALT_FRAME"/>
    <property type="molecule type" value="Genomic_DNA"/>
</dbReference>
<dbReference type="EMBL" id="D11079">
    <property type="protein sequence ID" value="BAA01850.1"/>
    <property type="status" value="ALT_FRAME"/>
    <property type="molecule type" value="Genomic_DNA"/>
</dbReference>
<dbReference type="EMBL" id="AY243312">
    <property type="protein sequence ID" value="AAO89482.1"/>
    <property type="molecule type" value="Genomic_DNA"/>
</dbReference>
<dbReference type="PIR" id="JQ1813">
    <property type="entry name" value="JQ1813"/>
</dbReference>
<dbReference type="PIR" id="JQ1814">
    <property type="entry name" value="JQ1814"/>
</dbReference>
<dbReference type="RefSeq" id="YP_233085.1">
    <property type="nucleotide sequence ID" value="NC_006998.1"/>
</dbReference>
<dbReference type="SMR" id="Q01223"/>
<dbReference type="DNASU" id="3707580"/>
<dbReference type="GeneID" id="3707580"/>
<dbReference type="KEGG" id="vg:3707580"/>
<dbReference type="Proteomes" id="UP000000344">
    <property type="component" value="Genome"/>
</dbReference>
<dbReference type="Gene3D" id="1.25.40.20">
    <property type="entry name" value="Ankyrin repeat-containing domain"/>
    <property type="match status" value="2"/>
</dbReference>
<dbReference type="InterPro" id="IPR002110">
    <property type="entry name" value="Ankyrin_rpt"/>
</dbReference>
<dbReference type="InterPro" id="IPR036770">
    <property type="entry name" value="Ankyrin_rpt-contain_sf"/>
</dbReference>
<dbReference type="InterPro" id="IPR050745">
    <property type="entry name" value="Multifunctional_regulatory"/>
</dbReference>
<dbReference type="PANTHER" id="PTHR24189:SF50">
    <property type="entry name" value="ANKYRIN REPEAT AND SOCS BOX PROTEIN 2"/>
    <property type="match status" value="1"/>
</dbReference>
<dbReference type="PANTHER" id="PTHR24189">
    <property type="entry name" value="MYOTROPHIN"/>
    <property type="match status" value="1"/>
</dbReference>
<dbReference type="Pfam" id="PF00023">
    <property type="entry name" value="Ank"/>
    <property type="match status" value="1"/>
</dbReference>
<dbReference type="SMART" id="SM00248">
    <property type="entry name" value="ANK"/>
    <property type="match status" value="5"/>
</dbReference>
<dbReference type="SUPFAM" id="SSF48403">
    <property type="entry name" value="Ankyrin repeat"/>
    <property type="match status" value="1"/>
</dbReference>
<dbReference type="PROSITE" id="PS50297">
    <property type="entry name" value="ANK_REP_REGION"/>
    <property type="match status" value="1"/>
</dbReference>
<dbReference type="PROSITE" id="PS50088">
    <property type="entry name" value="ANK_REPEAT"/>
    <property type="match status" value="1"/>
</dbReference>
<name>VA203_VACCW</name>
<comment type="miscellaneous">
    <text>Corresponds to the C-terminal part of Kelch repeat and BTB domain-containing protein 2 in cowpoxvirus.</text>
</comment>
<comment type="similarity">
    <text evidence="1">Belongs to the orthopoxviruses VACWR203 protein family.</text>
</comment>
<comment type="sequence caution" evidence="1">
    <conflict type="frameshift">
        <sequence resource="EMBL-CDS" id="BAA01849"/>
    </conflict>
</comment>
<comment type="sequence caution" evidence="1">
    <conflict type="frameshift">
        <sequence resource="EMBL-CDS" id="BAA01850"/>
    </conflict>
</comment>
<organism>
    <name type="scientific">Vaccinia virus (strain Western Reserve)</name>
    <name type="common">VACV</name>
    <name type="synonym">Vaccinia virus (strain WR)</name>
    <dbReference type="NCBI Taxonomy" id="10254"/>
    <lineage>
        <taxon>Viruses</taxon>
        <taxon>Varidnaviria</taxon>
        <taxon>Bamfordvirae</taxon>
        <taxon>Nucleocytoviricota</taxon>
        <taxon>Pokkesviricetes</taxon>
        <taxon>Chitovirales</taxon>
        <taxon>Poxviridae</taxon>
        <taxon>Chordopoxvirinae</taxon>
        <taxon>Orthopoxvirus</taxon>
        <taxon>Vaccinia virus</taxon>
    </lineage>
</organism>
<gene>
    <name type="ordered locus">VACWR203</name>
</gene>
<reference key="1">
    <citation type="journal article" date="1991" name="J. Gen. Virol.">
        <title>Nucleotide sequence of 42 kbp of vaccinia virus strain WR from near the right inverted terminal repeat.</title>
        <authorList>
            <person name="Smith G.L."/>
            <person name="Chan Y.S."/>
            <person name="Howard S.T."/>
        </authorList>
    </citation>
    <scope>NUCLEOTIDE SEQUENCE [GENOMIC DNA]</scope>
</reference>
<reference key="2">
    <citation type="submission" date="2003-02" db="EMBL/GenBank/DDBJ databases">
        <title>Sequencing of the coding region of Vaccinia-WR to an average 9-fold redundancy and an error rate of 0.16/10kb.</title>
        <authorList>
            <person name="Esposito J.J."/>
            <person name="Frace A.M."/>
            <person name="Sammons S.A."/>
            <person name="Olsen-Rasmussen M."/>
            <person name="Osborne J."/>
            <person name="Wohlhueter R."/>
        </authorList>
    </citation>
    <scope>NUCLEOTIDE SEQUENCE [LARGE SCALE GENOMIC DNA]</scope>
</reference>
<sequence length="309" mass="36399">MEMYPRHRYSKHSVFKGFSDKVRKNDLDMNVVKELLSNGASLTIKDSSNKDPITVYFRRTIMNLEMIDERKYIVHSYLKNYKNFDYPFFRKLVLTNKHCLNNYYNISDSKYGTPLHILASNKKLITPNYMKLLVYNGNDINARGEDTQMRTPLHKYLCKFVYHNIEYGIRYYNEKIIDAFIELGADLTIPNDDGMIPVVYCIHSNAEYGYNNITNIKIIRKLLNLSRRASHNLFRDRVMHDYISNTYIDLECLDIIRSLDGFDINGYFEGRTPLHCAIQHNFTQIAKYLLDRGADIVVPNTLIIHQYIQ</sequence>
<feature type="chain" id="PRO_0000067092" description="Ankyrin repeat protein VACWR203">
    <location>
        <begin position="1"/>
        <end position="309"/>
    </location>
</feature>
<feature type="repeat" description="ANK 1">
    <location>
        <begin position="13"/>
        <end position="44"/>
    </location>
</feature>
<feature type="repeat" description="ANK 2">
    <location>
        <begin position="110"/>
        <end position="142"/>
    </location>
</feature>
<feature type="repeat" description="ANK 3">
    <location>
        <begin position="160"/>
        <end position="189"/>
    </location>
</feature>
<feature type="repeat" description="ANK 4">
    <location>
        <begin position="197"/>
        <end position="231"/>
    </location>
</feature>
<feature type="repeat" description="ANK 5">
    <location>
        <begin position="269"/>
        <end position="298"/>
    </location>
</feature>
<evidence type="ECO:0000305" key="1"/>
<protein>
    <recommendedName>
        <fullName>Ankyrin repeat protein VACWR203</fullName>
    </recommendedName>
</protein>